<evidence type="ECO:0000250" key="1"/>
<evidence type="ECO:0000255" key="2">
    <source>
        <dbReference type="PROSITE-ProRule" id="PRU00116"/>
    </source>
</evidence>
<evidence type="ECO:0000256" key="3">
    <source>
        <dbReference type="SAM" id="MobiDB-lite"/>
    </source>
</evidence>
<evidence type="ECO:0000305" key="4"/>
<comment type="function">
    <text evidence="1">Sperm surface zona pellucida binding protein. Helps to bind spermatozoa to the zona pellucida with high affinity. Might function in binding zona pellucida and carbohydrates (By similarity).</text>
</comment>
<comment type="subunit">
    <text evidence="1">Homodimer. May interact with ROPN1 (By similarity).</text>
</comment>
<comment type="subcellular location">
    <subcellularLocation>
        <location evidence="4">Membrane</location>
        <topology evidence="4">Peripheral membrane protein</topology>
    </subcellularLocation>
</comment>
<comment type="tissue specificity">
    <text>Testis- and sperm-specific.</text>
</comment>
<sequence>MSIPFSNTHYRIPQGFGNLLEGLTREILREQPDNIPAFAAAYFENLLEKREKTSFDPAEWGAKVEDRFYNNHAFKEQEQVEKCEQELAKSSGREETPVTPFEESTEEEREQEEAAALKIQSLFRGHVAREEVKKMKSDKNENLKEEADN</sequence>
<feature type="chain" id="PRO_0000181344" description="Sperm surface protein Sp17">
    <location>
        <begin position="1"/>
        <end position="149"/>
    </location>
</feature>
<feature type="domain" description="IQ" evidence="2">
    <location>
        <begin position="112"/>
        <end position="141"/>
    </location>
</feature>
<feature type="region of interest" description="Disordered" evidence="3">
    <location>
        <begin position="83"/>
        <end position="114"/>
    </location>
</feature>
<feature type="compositionally biased region" description="Basic and acidic residues" evidence="3">
    <location>
        <begin position="83"/>
        <end position="96"/>
    </location>
</feature>
<feature type="compositionally biased region" description="Acidic residues" evidence="3">
    <location>
        <begin position="103"/>
        <end position="113"/>
    </location>
</feature>
<reference key="1">
    <citation type="journal article" date="1995" name="Biol. Reprod.">
        <title>Sequence and localization of the mouse sperm autoantigenic protein, Sp17.</title>
        <authorList>
            <person name="Kong M."/>
            <person name="Richardson R.T."/>
            <person name="Widgren E.E."/>
            <person name="O'Rand M.G."/>
        </authorList>
    </citation>
    <scope>NUCLEOTIDE SEQUENCE [MRNA]</scope>
    <source>
        <strain>BALB/cJ</strain>
        <tissue>Testis</tissue>
    </source>
</reference>
<reference key="2">
    <citation type="journal article" date="2004" name="Genome Res.">
        <title>The status, quality, and expansion of the NIH full-length cDNA project: the Mammalian Gene Collection (MGC).</title>
        <authorList>
            <consortium name="The MGC Project Team"/>
        </authorList>
    </citation>
    <scope>NUCLEOTIDE SEQUENCE [LARGE SCALE MRNA]</scope>
    <source>
        <tissue>Testis</tissue>
    </source>
</reference>
<reference key="3">
    <citation type="journal article" date="2010" name="Cell">
        <title>A tissue-specific atlas of mouse protein phosphorylation and expression.</title>
        <authorList>
            <person name="Huttlin E.L."/>
            <person name="Jedrychowski M.P."/>
            <person name="Elias J.E."/>
            <person name="Goswami T."/>
            <person name="Rad R."/>
            <person name="Beausoleil S.A."/>
            <person name="Villen J."/>
            <person name="Haas W."/>
            <person name="Sowa M.E."/>
            <person name="Gygi S.P."/>
        </authorList>
    </citation>
    <scope>IDENTIFICATION BY MASS SPECTROMETRY [LARGE SCALE ANALYSIS]</scope>
    <source>
        <tissue>Testis</tissue>
    </source>
</reference>
<gene>
    <name type="primary">Spa17</name>
    <name type="synonym">Sp17</name>
</gene>
<organism>
    <name type="scientific">Mus musculus</name>
    <name type="common">Mouse</name>
    <dbReference type="NCBI Taxonomy" id="10090"/>
    <lineage>
        <taxon>Eukaryota</taxon>
        <taxon>Metazoa</taxon>
        <taxon>Chordata</taxon>
        <taxon>Craniata</taxon>
        <taxon>Vertebrata</taxon>
        <taxon>Euteleostomi</taxon>
        <taxon>Mammalia</taxon>
        <taxon>Eutheria</taxon>
        <taxon>Euarchontoglires</taxon>
        <taxon>Glires</taxon>
        <taxon>Rodentia</taxon>
        <taxon>Myomorpha</taxon>
        <taxon>Muroidea</taxon>
        <taxon>Muridae</taxon>
        <taxon>Murinae</taxon>
        <taxon>Mus</taxon>
        <taxon>Mus</taxon>
    </lineage>
</organism>
<dbReference type="EMBL" id="Z46299">
    <property type="protein sequence ID" value="CAA86455.1"/>
    <property type="molecule type" value="mRNA"/>
</dbReference>
<dbReference type="EMBL" id="BC059727">
    <property type="protein sequence ID" value="AAH59727.1"/>
    <property type="molecule type" value="mRNA"/>
</dbReference>
<dbReference type="CCDS" id="CCDS22982.1"/>
<dbReference type="PIR" id="S49527">
    <property type="entry name" value="S49527"/>
</dbReference>
<dbReference type="RefSeq" id="NP_001311474.1">
    <property type="nucleotide sequence ID" value="NM_001324545.2"/>
</dbReference>
<dbReference type="RefSeq" id="NP_035579.1">
    <property type="nucleotide sequence ID" value="NM_011449.3"/>
</dbReference>
<dbReference type="SMR" id="Q62252"/>
<dbReference type="FunCoup" id="Q62252">
    <property type="interactions" value="85"/>
</dbReference>
<dbReference type="STRING" id="10090.ENSMUSP00000002013"/>
<dbReference type="iPTMnet" id="Q62252"/>
<dbReference type="PhosphoSitePlus" id="Q62252"/>
<dbReference type="REPRODUCTION-2DPAGE" id="Q62252"/>
<dbReference type="PaxDb" id="10090-ENSMUSP00000002013"/>
<dbReference type="ProteomicsDB" id="257289"/>
<dbReference type="Antibodypedia" id="32898">
    <property type="antibodies" value="280 antibodies from 25 providers"/>
</dbReference>
<dbReference type="DNASU" id="20686"/>
<dbReference type="Ensembl" id="ENSMUST00000002013.11">
    <property type="protein sequence ID" value="ENSMUSP00000002013.10"/>
    <property type="gene ID" value="ENSMUSG00000001948.11"/>
</dbReference>
<dbReference type="GeneID" id="20686"/>
<dbReference type="KEGG" id="mmu:20686"/>
<dbReference type="UCSC" id="uc009ovd.2">
    <property type="organism name" value="mouse"/>
</dbReference>
<dbReference type="AGR" id="MGI:1333778"/>
<dbReference type="CTD" id="53340"/>
<dbReference type="MGI" id="MGI:1333778">
    <property type="gene designation" value="Spa17"/>
</dbReference>
<dbReference type="VEuPathDB" id="HostDB:ENSMUSG00000001948"/>
<dbReference type="eggNOG" id="ENOG502S4R6">
    <property type="taxonomic scope" value="Eukaryota"/>
</dbReference>
<dbReference type="GeneTree" id="ENSGT00440000039164"/>
<dbReference type="HOGENOM" id="CLU_115900_0_0_1"/>
<dbReference type="InParanoid" id="Q62252"/>
<dbReference type="OMA" id="STHYRIP"/>
<dbReference type="OrthoDB" id="252964at2759"/>
<dbReference type="PhylomeDB" id="Q62252"/>
<dbReference type="TreeFam" id="TF332959"/>
<dbReference type="BioGRID-ORCS" id="20686">
    <property type="hits" value="0 hits in 77 CRISPR screens"/>
</dbReference>
<dbReference type="ChiTaRS" id="Spa17">
    <property type="organism name" value="mouse"/>
</dbReference>
<dbReference type="PRO" id="PR:Q62252"/>
<dbReference type="Proteomes" id="UP000000589">
    <property type="component" value="Chromosome 9"/>
</dbReference>
<dbReference type="RNAct" id="Q62252">
    <property type="molecule type" value="protein"/>
</dbReference>
<dbReference type="Bgee" id="ENSMUSG00000001948">
    <property type="expression patterns" value="Expressed in seminiferous tubule of testis and 190 other cell types or tissues"/>
</dbReference>
<dbReference type="ExpressionAtlas" id="Q62252">
    <property type="expression patterns" value="baseline and differential"/>
</dbReference>
<dbReference type="GO" id="GO:0005929">
    <property type="term" value="C:cilium"/>
    <property type="evidence" value="ECO:0000314"/>
    <property type="project" value="MGI"/>
</dbReference>
<dbReference type="GO" id="GO:0005737">
    <property type="term" value="C:cytoplasm"/>
    <property type="evidence" value="ECO:0000314"/>
    <property type="project" value="MGI"/>
</dbReference>
<dbReference type="GO" id="GO:0009897">
    <property type="term" value="C:external side of plasma membrane"/>
    <property type="evidence" value="ECO:0000314"/>
    <property type="project" value="MGI"/>
</dbReference>
<dbReference type="GO" id="GO:0043005">
    <property type="term" value="C:neuron projection"/>
    <property type="evidence" value="ECO:0000314"/>
    <property type="project" value="MGI"/>
</dbReference>
<dbReference type="GO" id="GO:0035686">
    <property type="term" value="C:sperm fibrous sheath"/>
    <property type="evidence" value="ECO:0000314"/>
    <property type="project" value="MGI"/>
</dbReference>
<dbReference type="GO" id="GO:0097228">
    <property type="term" value="C:sperm principal piece"/>
    <property type="evidence" value="ECO:0000314"/>
    <property type="project" value="MGI"/>
</dbReference>
<dbReference type="GO" id="GO:0007339">
    <property type="term" value="P:binding of sperm to zona pellucida"/>
    <property type="evidence" value="ECO:0000304"/>
    <property type="project" value="MGI"/>
</dbReference>
<dbReference type="CDD" id="cd12100">
    <property type="entry name" value="DD_CABYR_SP17"/>
    <property type="match status" value="1"/>
</dbReference>
<dbReference type="CDD" id="cd23767">
    <property type="entry name" value="IQCD"/>
    <property type="match status" value="1"/>
</dbReference>
<dbReference type="FunFam" id="1.20.5.190:FF:000116">
    <property type="match status" value="1"/>
</dbReference>
<dbReference type="FunFam" id="1.20.890.10:FF:000006">
    <property type="entry name" value="Sperm surface protein Sp17"/>
    <property type="match status" value="1"/>
</dbReference>
<dbReference type="Gene3D" id="1.20.5.190">
    <property type="match status" value="1"/>
</dbReference>
<dbReference type="Gene3D" id="1.20.890.10">
    <property type="entry name" value="cAMP-dependent protein kinase regulatory subunit, dimerization-anchoring domain"/>
    <property type="match status" value="1"/>
</dbReference>
<dbReference type="InterPro" id="IPR003117">
    <property type="entry name" value="cAMP_dep_PK_reg_su_I/II_a/b"/>
</dbReference>
<dbReference type="InterPro" id="IPR047579">
    <property type="entry name" value="DD_CABYR_SP17"/>
</dbReference>
<dbReference type="InterPro" id="IPR000048">
    <property type="entry name" value="IQ_motif_EF-hand-BS"/>
</dbReference>
<dbReference type="InterPro" id="IPR012105">
    <property type="entry name" value="Sp17"/>
</dbReference>
<dbReference type="PANTHER" id="PTHR10699:SF11">
    <property type="entry name" value="IGLOO, ISOFORM A"/>
    <property type="match status" value="1"/>
</dbReference>
<dbReference type="PANTHER" id="PTHR10699">
    <property type="entry name" value="NEUROMODULIN"/>
    <property type="match status" value="1"/>
</dbReference>
<dbReference type="Pfam" id="PF00612">
    <property type="entry name" value="IQ"/>
    <property type="match status" value="1"/>
</dbReference>
<dbReference type="Pfam" id="PF02197">
    <property type="entry name" value="RIIa"/>
    <property type="match status" value="1"/>
</dbReference>
<dbReference type="PIRSF" id="PIRSF016533">
    <property type="entry name" value="Sp17"/>
    <property type="match status" value="1"/>
</dbReference>
<dbReference type="SMART" id="SM00015">
    <property type="entry name" value="IQ"/>
    <property type="match status" value="1"/>
</dbReference>
<dbReference type="SMART" id="SM00394">
    <property type="entry name" value="RIIa"/>
    <property type="match status" value="1"/>
</dbReference>
<dbReference type="SUPFAM" id="SSF47391">
    <property type="entry name" value="Dimerization-anchoring domain of cAMP-dependent PK regulatory subunit"/>
    <property type="match status" value="1"/>
</dbReference>
<dbReference type="PROSITE" id="PS50096">
    <property type="entry name" value="IQ"/>
    <property type="match status" value="1"/>
</dbReference>
<name>SP17_MOUSE</name>
<protein>
    <recommendedName>
        <fullName>Sperm surface protein Sp17</fullName>
    </recommendedName>
    <alternativeName>
        <fullName>Sperm autoantigenic protein 17</fullName>
    </alternativeName>
</protein>
<keyword id="KW-0472">Membrane</keyword>
<keyword id="KW-1185">Reference proteome</keyword>
<accession>Q62252</accession>
<proteinExistence type="evidence at protein level"/>